<organism>
    <name type="scientific">Salmonella paratyphi C (strain RKS4594)</name>
    <dbReference type="NCBI Taxonomy" id="476213"/>
    <lineage>
        <taxon>Bacteria</taxon>
        <taxon>Pseudomonadati</taxon>
        <taxon>Pseudomonadota</taxon>
        <taxon>Gammaproteobacteria</taxon>
        <taxon>Enterobacterales</taxon>
        <taxon>Enterobacteriaceae</taxon>
        <taxon>Salmonella</taxon>
    </lineage>
</organism>
<name>MSRQ_SALPC</name>
<comment type="function">
    <text evidence="1">Part of the MsrPQ system that repairs oxidized periplasmic proteins containing methionine sulfoxide residues (Met-O), using respiratory chain electrons. Thus protects these proteins from oxidative-stress damage caused by reactive species of oxygen and chlorine generated by the host defense mechanisms. MsrPQ is essential for the maintenance of envelope integrity under bleach stress, rescuing a wide series of structurally unrelated periplasmic proteins from methionine oxidation, including the primary periplasmic chaperone SurA and the lipoprotein Pal. MsrQ provides electrons for reduction to the reductase catalytic subunit MsrP, using the quinone pool of the respiratory chain.</text>
</comment>
<comment type="cofactor">
    <cofactor evidence="1">
        <name>FMN</name>
        <dbReference type="ChEBI" id="CHEBI:58210"/>
    </cofactor>
    <text evidence="1">Binds 1 FMN per subunit.</text>
</comment>
<comment type="cofactor">
    <cofactor evidence="1">
        <name>heme b</name>
        <dbReference type="ChEBI" id="CHEBI:60344"/>
    </cofactor>
    <text evidence="1">Binds 1 heme b (iron(II)-protoporphyrin IX) group per subunit.</text>
</comment>
<comment type="subunit">
    <text evidence="1">Heterodimer of a catalytic subunit (MsrP) and a heme-binding subunit (MsrQ).</text>
</comment>
<comment type="subcellular location">
    <subcellularLocation>
        <location evidence="1">Cell inner membrane</location>
        <topology evidence="1">Multi-pass membrane protein</topology>
    </subcellularLocation>
</comment>
<comment type="similarity">
    <text evidence="1">Belongs to the MsrQ family.</text>
</comment>
<evidence type="ECO:0000255" key="1">
    <source>
        <dbReference type="HAMAP-Rule" id="MF_01207"/>
    </source>
</evidence>
<dbReference type="EMBL" id="CP000857">
    <property type="protein sequence ID" value="ACN47534.1"/>
    <property type="molecule type" value="Genomic_DNA"/>
</dbReference>
<dbReference type="RefSeq" id="WP_001240053.1">
    <property type="nucleotide sequence ID" value="NC_012125.1"/>
</dbReference>
<dbReference type="SMR" id="C0PZS4"/>
<dbReference type="KEGG" id="sei:SPC_3449"/>
<dbReference type="HOGENOM" id="CLU_080662_1_0_6"/>
<dbReference type="Proteomes" id="UP000001599">
    <property type="component" value="Chromosome"/>
</dbReference>
<dbReference type="GO" id="GO:0005886">
    <property type="term" value="C:plasma membrane"/>
    <property type="evidence" value="ECO:0007669"/>
    <property type="project" value="UniProtKB-SubCell"/>
</dbReference>
<dbReference type="GO" id="GO:0009055">
    <property type="term" value="F:electron transfer activity"/>
    <property type="evidence" value="ECO:0007669"/>
    <property type="project" value="UniProtKB-UniRule"/>
</dbReference>
<dbReference type="GO" id="GO:0010181">
    <property type="term" value="F:FMN binding"/>
    <property type="evidence" value="ECO:0007669"/>
    <property type="project" value="UniProtKB-UniRule"/>
</dbReference>
<dbReference type="GO" id="GO:0020037">
    <property type="term" value="F:heme binding"/>
    <property type="evidence" value="ECO:0007669"/>
    <property type="project" value="UniProtKB-UniRule"/>
</dbReference>
<dbReference type="GO" id="GO:0046872">
    <property type="term" value="F:metal ion binding"/>
    <property type="evidence" value="ECO:0007669"/>
    <property type="project" value="UniProtKB-KW"/>
</dbReference>
<dbReference type="GO" id="GO:0016679">
    <property type="term" value="F:oxidoreductase activity, acting on diphenols and related substances as donors"/>
    <property type="evidence" value="ECO:0007669"/>
    <property type="project" value="TreeGrafter"/>
</dbReference>
<dbReference type="GO" id="GO:0030091">
    <property type="term" value="P:protein repair"/>
    <property type="evidence" value="ECO:0007669"/>
    <property type="project" value="UniProtKB-UniRule"/>
</dbReference>
<dbReference type="HAMAP" id="MF_01207">
    <property type="entry name" value="MsrQ"/>
    <property type="match status" value="1"/>
</dbReference>
<dbReference type="InterPro" id="IPR013130">
    <property type="entry name" value="Fe3_Rdtase_TM_dom"/>
</dbReference>
<dbReference type="InterPro" id="IPR022837">
    <property type="entry name" value="MsrQ-like"/>
</dbReference>
<dbReference type="NCBIfam" id="NF003831">
    <property type="entry name" value="PRK05419.1-2"/>
    <property type="match status" value="1"/>
</dbReference>
<dbReference type="NCBIfam" id="NF003832">
    <property type="entry name" value="PRK05419.1-4"/>
    <property type="match status" value="1"/>
</dbReference>
<dbReference type="PANTHER" id="PTHR36964">
    <property type="entry name" value="PROTEIN-METHIONINE-SULFOXIDE REDUCTASE HEME-BINDING SUBUNIT MSRQ"/>
    <property type="match status" value="1"/>
</dbReference>
<dbReference type="PANTHER" id="PTHR36964:SF1">
    <property type="entry name" value="PROTEIN-METHIONINE-SULFOXIDE REDUCTASE HEME-BINDING SUBUNIT MSRQ"/>
    <property type="match status" value="1"/>
</dbReference>
<dbReference type="Pfam" id="PF01794">
    <property type="entry name" value="Ferric_reduct"/>
    <property type="match status" value="1"/>
</dbReference>
<sequence>MRLTAKQITWLKVCLHLAGFLPLLWLFWAINHGGLSADPVKDIQHFTGRTALKFLLATLLVSPLARYAKQPLLIRTRRLLGLWCFVWATLHLTSYALLELGIHNLALLGSELISRPYLTLGIISWLVLLALTLTSTQFAQRKLGKRWQTLHNVVYLVAILAPIHYLWSVKILSPQPVIYAALALALLALRYRKFRQWWR</sequence>
<proteinExistence type="inferred from homology"/>
<accession>C0PZS4</accession>
<keyword id="KW-0997">Cell inner membrane</keyword>
<keyword id="KW-1003">Cell membrane</keyword>
<keyword id="KW-0249">Electron transport</keyword>
<keyword id="KW-0285">Flavoprotein</keyword>
<keyword id="KW-0288">FMN</keyword>
<keyword id="KW-0349">Heme</keyword>
<keyword id="KW-0408">Iron</keyword>
<keyword id="KW-0472">Membrane</keyword>
<keyword id="KW-0479">Metal-binding</keyword>
<keyword id="KW-0812">Transmembrane</keyword>
<keyword id="KW-1133">Transmembrane helix</keyword>
<keyword id="KW-0813">Transport</keyword>
<reference key="1">
    <citation type="journal article" date="2009" name="PLoS ONE">
        <title>Salmonella paratyphi C: genetic divergence from Salmonella choleraesuis and pathogenic convergence with Salmonella typhi.</title>
        <authorList>
            <person name="Liu W.-Q."/>
            <person name="Feng Y."/>
            <person name="Wang Y."/>
            <person name="Zou Q.-H."/>
            <person name="Chen F."/>
            <person name="Guo J.-T."/>
            <person name="Peng Y.-H."/>
            <person name="Jin Y."/>
            <person name="Li Y.-G."/>
            <person name="Hu S.-N."/>
            <person name="Johnston R.N."/>
            <person name="Liu G.-R."/>
            <person name="Liu S.-L."/>
        </authorList>
    </citation>
    <scope>NUCLEOTIDE SEQUENCE [LARGE SCALE GENOMIC DNA]</scope>
    <source>
        <strain>RKS4594</strain>
    </source>
</reference>
<protein>
    <recommendedName>
        <fullName evidence="1">Protein-methionine-sulfoxide reductase heme-binding subunit MsrQ</fullName>
    </recommendedName>
    <alternativeName>
        <fullName evidence="1">Flavocytochrome MsrQ</fullName>
    </alternativeName>
</protein>
<gene>
    <name evidence="1" type="primary">msrQ</name>
    <name type="ordered locus">SPC_3449</name>
</gene>
<feature type="chain" id="PRO_1000164665" description="Protein-methionine-sulfoxide reductase heme-binding subunit MsrQ">
    <location>
        <begin position="1"/>
        <end position="199"/>
    </location>
</feature>
<feature type="transmembrane region" description="Helical" evidence="1">
    <location>
        <begin position="10"/>
        <end position="30"/>
    </location>
</feature>
<feature type="transmembrane region" description="Helical" evidence="1">
    <location>
        <begin position="82"/>
        <end position="102"/>
    </location>
</feature>
<feature type="transmembrane region" description="Helical" evidence="1">
    <location>
        <begin position="116"/>
        <end position="136"/>
    </location>
</feature>
<feature type="transmembrane region" description="Helical" evidence="1">
    <location>
        <begin position="153"/>
        <end position="173"/>
    </location>
</feature>